<reference key="1">
    <citation type="journal article" date="2004" name="Plant Physiol.">
        <title>A comparison of rice chloroplast genomes.</title>
        <authorList>
            <person name="Tang J."/>
            <person name="Xia H."/>
            <person name="Cao M."/>
            <person name="Zhang X."/>
            <person name="Zeng W."/>
            <person name="Hu S."/>
            <person name="Tong W."/>
            <person name="Wang J."/>
            <person name="Wang J."/>
            <person name="Yu J."/>
            <person name="Yang H."/>
            <person name="Zhu L."/>
        </authorList>
    </citation>
    <scope>NUCLEOTIDE SEQUENCE [LARGE SCALE GENOMIC DNA]</scope>
    <source>
        <strain>cv. 93-11</strain>
    </source>
</reference>
<protein>
    <recommendedName>
        <fullName evidence="1">DNA-directed RNA polymerase subunit beta</fullName>
        <ecNumber evidence="1">2.7.7.6</ecNumber>
    </recommendedName>
    <alternativeName>
        <fullName evidence="1">PEP</fullName>
    </alternativeName>
    <alternativeName>
        <fullName evidence="1">Plastid-encoded RNA polymerase subunit beta</fullName>
        <shortName evidence="1">RNA polymerase subunit beta</shortName>
    </alternativeName>
</protein>
<dbReference type="EC" id="2.7.7.6" evidence="1"/>
<dbReference type="EMBL" id="AY522329">
    <property type="protein sequence ID" value="AAS46046.1"/>
    <property type="molecule type" value="Genomic_DNA"/>
</dbReference>
<dbReference type="RefSeq" id="YP_009161354.1">
    <property type="nucleotide sequence ID" value="NC_027678.1"/>
</dbReference>
<dbReference type="RefSeq" id="YP_654206.1">
    <property type="nucleotide sequence ID" value="NC_008155.1"/>
</dbReference>
<dbReference type="SMR" id="P0C502"/>
<dbReference type="STRING" id="39946.P0C502"/>
<dbReference type="GeneID" id="4126922"/>
<dbReference type="Proteomes" id="UP000007015">
    <property type="component" value="Chloroplast"/>
</dbReference>
<dbReference type="GO" id="GO:0009507">
    <property type="term" value="C:chloroplast"/>
    <property type="evidence" value="ECO:0007669"/>
    <property type="project" value="UniProtKB-SubCell"/>
</dbReference>
<dbReference type="GO" id="GO:0000428">
    <property type="term" value="C:DNA-directed RNA polymerase complex"/>
    <property type="evidence" value="ECO:0007669"/>
    <property type="project" value="UniProtKB-KW"/>
</dbReference>
<dbReference type="GO" id="GO:0005739">
    <property type="term" value="C:mitochondrion"/>
    <property type="evidence" value="ECO:0007669"/>
    <property type="project" value="GOC"/>
</dbReference>
<dbReference type="GO" id="GO:0009536">
    <property type="term" value="C:plastid"/>
    <property type="evidence" value="ECO:0000305"/>
    <property type="project" value="Gramene"/>
</dbReference>
<dbReference type="GO" id="GO:0003677">
    <property type="term" value="F:DNA binding"/>
    <property type="evidence" value="ECO:0007669"/>
    <property type="project" value="UniProtKB-UniRule"/>
</dbReference>
<dbReference type="GO" id="GO:0003899">
    <property type="term" value="F:DNA-directed RNA polymerase activity"/>
    <property type="evidence" value="ECO:0007669"/>
    <property type="project" value="UniProtKB-UniRule"/>
</dbReference>
<dbReference type="GO" id="GO:0032549">
    <property type="term" value="F:ribonucleoside binding"/>
    <property type="evidence" value="ECO:0007669"/>
    <property type="project" value="InterPro"/>
</dbReference>
<dbReference type="GO" id="GO:0006351">
    <property type="term" value="P:DNA-templated transcription"/>
    <property type="evidence" value="ECO:0007669"/>
    <property type="project" value="UniProtKB-UniRule"/>
</dbReference>
<dbReference type="CDD" id="cd00653">
    <property type="entry name" value="RNA_pol_B_RPB2"/>
    <property type="match status" value="1"/>
</dbReference>
<dbReference type="Gene3D" id="2.40.50.100">
    <property type="match status" value="1"/>
</dbReference>
<dbReference type="Gene3D" id="2.40.50.150">
    <property type="match status" value="1"/>
</dbReference>
<dbReference type="Gene3D" id="3.90.1100.10">
    <property type="match status" value="1"/>
</dbReference>
<dbReference type="Gene3D" id="2.30.150.10">
    <property type="entry name" value="DNA-directed RNA polymerase, beta subunit, external 1 domain"/>
    <property type="match status" value="1"/>
</dbReference>
<dbReference type="Gene3D" id="2.40.270.10">
    <property type="entry name" value="DNA-directed RNA polymerase, subunit 2, domain 6"/>
    <property type="match status" value="2"/>
</dbReference>
<dbReference type="Gene3D" id="3.90.1800.10">
    <property type="entry name" value="RNA polymerase alpha subunit dimerisation domain"/>
    <property type="match status" value="1"/>
</dbReference>
<dbReference type="Gene3D" id="3.90.1110.10">
    <property type="entry name" value="RNA polymerase Rpb2, domain 2"/>
    <property type="match status" value="1"/>
</dbReference>
<dbReference type="HAMAP" id="MF_01321">
    <property type="entry name" value="RNApol_bact_RpoB"/>
    <property type="match status" value="1"/>
</dbReference>
<dbReference type="InterPro" id="IPR042107">
    <property type="entry name" value="DNA-dir_RNA_pol_bsu_ext_1_sf"/>
</dbReference>
<dbReference type="InterPro" id="IPR015712">
    <property type="entry name" value="DNA-dir_RNA_pol_su2"/>
</dbReference>
<dbReference type="InterPro" id="IPR007120">
    <property type="entry name" value="DNA-dir_RNAP_su2_dom"/>
</dbReference>
<dbReference type="InterPro" id="IPR037033">
    <property type="entry name" value="DNA-dir_RNAP_su2_hyb_sf"/>
</dbReference>
<dbReference type="InterPro" id="IPR010243">
    <property type="entry name" value="RNA_pol_bsu_bac"/>
</dbReference>
<dbReference type="InterPro" id="IPR007121">
    <property type="entry name" value="RNA_pol_bsu_CS"/>
</dbReference>
<dbReference type="InterPro" id="IPR007642">
    <property type="entry name" value="RNA_pol_Rpb2_2"/>
</dbReference>
<dbReference type="InterPro" id="IPR037034">
    <property type="entry name" value="RNA_pol_Rpb2_2_sf"/>
</dbReference>
<dbReference type="InterPro" id="IPR007645">
    <property type="entry name" value="RNA_pol_Rpb2_3"/>
</dbReference>
<dbReference type="InterPro" id="IPR007641">
    <property type="entry name" value="RNA_pol_Rpb2_7"/>
</dbReference>
<dbReference type="InterPro" id="IPR014724">
    <property type="entry name" value="RNA_pol_RPB2_OB-fold"/>
</dbReference>
<dbReference type="NCBIfam" id="NF001616">
    <property type="entry name" value="PRK00405.1"/>
    <property type="match status" value="1"/>
</dbReference>
<dbReference type="PANTHER" id="PTHR20856">
    <property type="entry name" value="DNA-DIRECTED RNA POLYMERASE I SUBUNIT 2"/>
    <property type="match status" value="1"/>
</dbReference>
<dbReference type="Pfam" id="PF04561">
    <property type="entry name" value="RNA_pol_Rpb2_2"/>
    <property type="match status" value="1"/>
</dbReference>
<dbReference type="Pfam" id="PF04565">
    <property type="entry name" value="RNA_pol_Rpb2_3"/>
    <property type="match status" value="1"/>
</dbReference>
<dbReference type="Pfam" id="PF00562">
    <property type="entry name" value="RNA_pol_Rpb2_6"/>
    <property type="match status" value="1"/>
</dbReference>
<dbReference type="Pfam" id="PF04560">
    <property type="entry name" value="RNA_pol_Rpb2_7"/>
    <property type="match status" value="1"/>
</dbReference>
<dbReference type="SUPFAM" id="SSF64484">
    <property type="entry name" value="beta and beta-prime subunits of DNA dependent RNA-polymerase"/>
    <property type="match status" value="1"/>
</dbReference>
<dbReference type="PROSITE" id="PS01166">
    <property type="entry name" value="RNA_POL_BETA"/>
    <property type="match status" value="1"/>
</dbReference>
<keyword id="KW-0150">Chloroplast</keyword>
<keyword id="KW-0240">DNA-directed RNA polymerase</keyword>
<keyword id="KW-0548">Nucleotidyltransferase</keyword>
<keyword id="KW-0934">Plastid</keyword>
<keyword id="KW-1185">Reference proteome</keyword>
<keyword id="KW-0804">Transcription</keyword>
<keyword id="KW-0808">Transferase</keyword>
<evidence type="ECO:0000255" key="1">
    <source>
        <dbReference type="HAMAP-Rule" id="MF_01321"/>
    </source>
</evidence>
<name>RPOB_ORYSI</name>
<comment type="function">
    <text evidence="1">DNA-dependent RNA polymerase catalyzes the transcription of DNA into RNA using the four ribonucleoside triphosphates as substrates.</text>
</comment>
<comment type="catalytic activity">
    <reaction evidence="1">
        <text>RNA(n) + a ribonucleoside 5'-triphosphate = RNA(n+1) + diphosphate</text>
        <dbReference type="Rhea" id="RHEA:21248"/>
        <dbReference type="Rhea" id="RHEA-COMP:14527"/>
        <dbReference type="Rhea" id="RHEA-COMP:17342"/>
        <dbReference type="ChEBI" id="CHEBI:33019"/>
        <dbReference type="ChEBI" id="CHEBI:61557"/>
        <dbReference type="ChEBI" id="CHEBI:140395"/>
        <dbReference type="EC" id="2.7.7.6"/>
    </reaction>
</comment>
<comment type="subunit">
    <text evidence="1">In plastids the minimal PEP RNA polymerase catalytic core is composed of four subunits: alpha, beta, beta', and beta''. When a (nuclear-encoded) sigma factor is associated with the core the holoenzyme is formed, which can initiate transcription.</text>
</comment>
<comment type="subcellular location">
    <subcellularLocation>
        <location>Plastid</location>
        <location>Chloroplast</location>
    </subcellularLocation>
</comment>
<comment type="similarity">
    <text evidence="1">Belongs to the RNA polymerase beta chain family.</text>
</comment>
<sequence>MLRNGNEGMSTIPGFSQIQFEGFCRFINQGLAEELEKFPTIKDPDHEISFQLFAKGYQLLEPSIKERDAVYESLTYSSELYVSARLIFGFDVQKQTISIGNIPIMNSLGTFIINGIYRIVINQILLSPGIYYRSELDHKGISIYTGTIISDWGGRSELAIDKKERIWARVSRKQKISILVLSSAMGSNLKEILDNVSYPEIFLSFPNAKEKKRIESKEKAILEFYQQFACVGGDLVFSESLCEELQKKFFQQKCELGRIGRRNMNRRLNLDIPQNSTFLLPRDVLAATDHLIGMKFETGILDDDDMNHLKNKRIRSVADLLQDQFGLALGRLQHAVQKTIRRVFIRQSKPTPQTLVTPTSTSILLITTYETFFGTYPLSQVFDQTNPLTQTVHGRKVSCLGPGGLTGRTASFRSRDIHPSHYGRICPIDTSEGINVGLTGSLAIHARIDHWWGSVESPFYEISEKAKKKKERQVVYLSPNRDEYYMIAAGNSLSLNRGIQEEQVVPARYRQEFLTIAWEQIHVRSIFPFQYFSIGGSLIPFIEHNDANRALMSSNMQRQAVPLSRSEKCIVGTGLERQTALDSRVSVIAEREGKIISTNSHKILLSSSGKTISIPLVTHRRSNKNTCMHQKPRVPRGKSIKKGQILAEGAATVGGELALGKNVLVAYMPWEGYNFEDAVLISERLVYEDIYTSFHIRKYEIQTDTTSQGSAEKITKEIPHLEEHLLRNLDRNGVVKLGSWVETGDILVGKLTPQIASESSYIAEAGLLRAIFGLEVSTSKETSLKLPIGGRGRVIDVKWIQRDPLDIMVRVYILQKREIKVGDKVAGRHGNKGIISKILPRQDMPYLQDGTPVDMVFNPLGVPSRMNVGQIFESSLGLAGDLLKKHYRIAPFDERYEQEASRKLVFSELYEASKQTKNPWVFEPEYPGKSRIFDGRTGDPFEQPVLIGKSYILKLIHQVDEKIHGRSTGPYSLVTQQPVRGRAKQGGQRIGEMEVWALEGFGVAHILQEILTYKSDHLIARQEILNATIWGKRVPNHEDPPESFRVLVRELRSLALELNHFLVSQKNFQVNREEV</sequence>
<gene>
    <name evidence="1" type="primary">rpoB</name>
    <name type="ORF">9311034</name>
</gene>
<accession>P0C502</accession>
<accession>P12091</accession>
<accession>Q6QXV7</accession>
<accession>Q6QY83</accession>
<organism>
    <name type="scientific">Oryza sativa subsp. indica</name>
    <name type="common">Rice</name>
    <dbReference type="NCBI Taxonomy" id="39946"/>
    <lineage>
        <taxon>Eukaryota</taxon>
        <taxon>Viridiplantae</taxon>
        <taxon>Streptophyta</taxon>
        <taxon>Embryophyta</taxon>
        <taxon>Tracheophyta</taxon>
        <taxon>Spermatophyta</taxon>
        <taxon>Magnoliopsida</taxon>
        <taxon>Liliopsida</taxon>
        <taxon>Poales</taxon>
        <taxon>Poaceae</taxon>
        <taxon>BOP clade</taxon>
        <taxon>Oryzoideae</taxon>
        <taxon>Oryzeae</taxon>
        <taxon>Oryzinae</taxon>
        <taxon>Oryza</taxon>
        <taxon>Oryza sativa</taxon>
    </lineage>
</organism>
<proteinExistence type="inferred from homology"/>
<feature type="chain" id="PRO_0000290093" description="DNA-directed RNA polymerase subunit beta">
    <location>
        <begin position="1"/>
        <end position="1075"/>
    </location>
</feature>
<geneLocation type="chloroplast"/>